<protein>
    <recommendedName>
        <fullName evidence="1">DNA-directed RNA polymerase subunit beta'</fullName>
        <shortName evidence="1">RNAP subunit beta'</shortName>
        <ecNumber evidence="1">2.7.7.6</ecNumber>
    </recommendedName>
    <alternativeName>
        <fullName evidence="1">RNA polymerase subunit beta'</fullName>
    </alternativeName>
    <alternativeName>
        <fullName evidence="1">Transcriptase subunit beta'</fullName>
    </alternativeName>
</protein>
<name>RPOC_STRS2</name>
<reference key="1">
    <citation type="journal article" date="2007" name="PLoS ONE">
        <title>A glimpse of streptococcal toxic shock syndrome from comparative genomics of S. suis 2 Chinese isolates.</title>
        <authorList>
            <person name="Chen C."/>
            <person name="Tang J."/>
            <person name="Dong W."/>
            <person name="Wang C."/>
            <person name="Feng Y."/>
            <person name="Wang J."/>
            <person name="Zheng F."/>
            <person name="Pan X."/>
            <person name="Liu D."/>
            <person name="Li M."/>
            <person name="Song Y."/>
            <person name="Zhu X."/>
            <person name="Sun H."/>
            <person name="Feng T."/>
            <person name="Guo Z."/>
            <person name="Ju A."/>
            <person name="Ge J."/>
            <person name="Dong Y."/>
            <person name="Sun W."/>
            <person name="Jiang Y."/>
            <person name="Wang J."/>
            <person name="Yan J."/>
            <person name="Yang H."/>
            <person name="Wang X."/>
            <person name="Gao G.F."/>
            <person name="Yang R."/>
            <person name="Wang J."/>
            <person name="Yu J."/>
        </authorList>
    </citation>
    <scope>NUCLEOTIDE SEQUENCE [LARGE SCALE GENOMIC DNA]</scope>
    <source>
        <strain>98HAH33</strain>
    </source>
</reference>
<evidence type="ECO:0000255" key="1">
    <source>
        <dbReference type="HAMAP-Rule" id="MF_01322"/>
    </source>
</evidence>
<evidence type="ECO:0000305" key="2"/>
<organism>
    <name type="scientific">Streptococcus suis (strain 98HAH33)</name>
    <dbReference type="NCBI Taxonomy" id="391296"/>
    <lineage>
        <taxon>Bacteria</taxon>
        <taxon>Bacillati</taxon>
        <taxon>Bacillota</taxon>
        <taxon>Bacilli</taxon>
        <taxon>Lactobacillales</taxon>
        <taxon>Streptococcaceae</taxon>
        <taxon>Streptococcus</taxon>
    </lineage>
</organism>
<feature type="chain" id="PRO_0000308891" description="DNA-directed RNA polymerase subunit beta'">
    <location>
        <begin position="1"/>
        <end position="1215"/>
    </location>
</feature>
<feature type="binding site" evidence="1">
    <location>
        <position position="60"/>
    </location>
    <ligand>
        <name>Zn(2+)</name>
        <dbReference type="ChEBI" id="CHEBI:29105"/>
        <label>1</label>
    </ligand>
</feature>
<feature type="binding site" evidence="1">
    <location>
        <position position="62"/>
    </location>
    <ligand>
        <name>Zn(2+)</name>
        <dbReference type="ChEBI" id="CHEBI:29105"/>
        <label>1</label>
    </ligand>
</feature>
<feature type="binding site" evidence="1">
    <location>
        <position position="75"/>
    </location>
    <ligand>
        <name>Zn(2+)</name>
        <dbReference type="ChEBI" id="CHEBI:29105"/>
        <label>1</label>
    </ligand>
</feature>
<feature type="binding site" evidence="1">
    <location>
        <position position="78"/>
    </location>
    <ligand>
        <name>Zn(2+)</name>
        <dbReference type="ChEBI" id="CHEBI:29105"/>
        <label>1</label>
    </ligand>
</feature>
<feature type="binding site" evidence="1">
    <location>
        <position position="450"/>
    </location>
    <ligand>
        <name>Mg(2+)</name>
        <dbReference type="ChEBI" id="CHEBI:18420"/>
    </ligand>
</feature>
<feature type="binding site" evidence="1">
    <location>
        <position position="452"/>
    </location>
    <ligand>
        <name>Mg(2+)</name>
        <dbReference type="ChEBI" id="CHEBI:18420"/>
    </ligand>
</feature>
<feature type="binding site" evidence="1">
    <location>
        <position position="454"/>
    </location>
    <ligand>
        <name>Mg(2+)</name>
        <dbReference type="ChEBI" id="CHEBI:18420"/>
    </ligand>
</feature>
<feature type="binding site" evidence="1">
    <location>
        <position position="818"/>
    </location>
    <ligand>
        <name>Zn(2+)</name>
        <dbReference type="ChEBI" id="CHEBI:29105"/>
        <label>2</label>
    </ligand>
</feature>
<feature type="binding site" evidence="1">
    <location>
        <position position="892"/>
    </location>
    <ligand>
        <name>Zn(2+)</name>
        <dbReference type="ChEBI" id="CHEBI:29105"/>
        <label>2</label>
    </ligand>
</feature>
<feature type="binding site" evidence="1">
    <location>
        <position position="899"/>
    </location>
    <ligand>
        <name>Zn(2+)</name>
        <dbReference type="ChEBI" id="CHEBI:29105"/>
        <label>2</label>
    </ligand>
</feature>
<feature type="binding site" evidence="1">
    <location>
        <position position="902"/>
    </location>
    <ligand>
        <name>Zn(2+)</name>
        <dbReference type="ChEBI" id="CHEBI:29105"/>
        <label>2</label>
    </ligand>
</feature>
<comment type="function">
    <text evidence="1">DNA-dependent RNA polymerase catalyzes the transcription of DNA into RNA using the four ribonucleoside triphosphates as substrates.</text>
</comment>
<comment type="catalytic activity">
    <reaction evidence="1">
        <text>RNA(n) + a ribonucleoside 5'-triphosphate = RNA(n+1) + diphosphate</text>
        <dbReference type="Rhea" id="RHEA:21248"/>
        <dbReference type="Rhea" id="RHEA-COMP:14527"/>
        <dbReference type="Rhea" id="RHEA-COMP:17342"/>
        <dbReference type="ChEBI" id="CHEBI:33019"/>
        <dbReference type="ChEBI" id="CHEBI:61557"/>
        <dbReference type="ChEBI" id="CHEBI:140395"/>
        <dbReference type="EC" id="2.7.7.6"/>
    </reaction>
</comment>
<comment type="cofactor">
    <cofactor evidence="1">
        <name>Mg(2+)</name>
        <dbReference type="ChEBI" id="CHEBI:18420"/>
    </cofactor>
    <text evidence="1">Binds 1 Mg(2+) ion per subunit.</text>
</comment>
<comment type="cofactor">
    <cofactor evidence="1">
        <name>Zn(2+)</name>
        <dbReference type="ChEBI" id="CHEBI:29105"/>
    </cofactor>
    <text evidence="1">Binds 2 Zn(2+) ions per subunit.</text>
</comment>
<comment type="subunit">
    <text evidence="1">The RNAP catalytic core consists of 2 alpha, 1 beta, 1 beta' and 1 omega subunit. When a sigma factor is associated with the core the holoenzyme is formed, which can initiate transcription.</text>
</comment>
<comment type="similarity">
    <text evidence="1">Belongs to the RNA polymerase beta' chain family.</text>
</comment>
<comment type="sequence caution" evidence="2">
    <conflict type="erroneous initiation">
        <sequence resource="EMBL-CDS" id="ABP91283"/>
    </conflict>
    <text>Extended N-terminus.</text>
</comment>
<proteinExistence type="inferred from homology"/>
<accession>A4VYU4</accession>
<keyword id="KW-0240">DNA-directed RNA polymerase</keyword>
<keyword id="KW-0460">Magnesium</keyword>
<keyword id="KW-0479">Metal-binding</keyword>
<keyword id="KW-0548">Nucleotidyltransferase</keyword>
<keyword id="KW-0804">Transcription</keyword>
<keyword id="KW-0808">Transferase</keyword>
<keyword id="KW-0862">Zinc</keyword>
<dbReference type="EC" id="2.7.7.6" evidence="1"/>
<dbReference type="EMBL" id="CP000408">
    <property type="protein sequence ID" value="ABP91283.1"/>
    <property type="status" value="ALT_INIT"/>
    <property type="molecule type" value="Genomic_DNA"/>
</dbReference>
<dbReference type="SMR" id="A4VYU4"/>
<dbReference type="KEGG" id="ssv:SSU98_0123"/>
<dbReference type="HOGENOM" id="CLU_000524_3_0_9"/>
<dbReference type="GO" id="GO:0000428">
    <property type="term" value="C:DNA-directed RNA polymerase complex"/>
    <property type="evidence" value="ECO:0007669"/>
    <property type="project" value="UniProtKB-KW"/>
</dbReference>
<dbReference type="GO" id="GO:0003677">
    <property type="term" value="F:DNA binding"/>
    <property type="evidence" value="ECO:0007669"/>
    <property type="project" value="UniProtKB-UniRule"/>
</dbReference>
<dbReference type="GO" id="GO:0003899">
    <property type="term" value="F:DNA-directed RNA polymerase activity"/>
    <property type="evidence" value="ECO:0007669"/>
    <property type="project" value="UniProtKB-UniRule"/>
</dbReference>
<dbReference type="GO" id="GO:0000287">
    <property type="term" value="F:magnesium ion binding"/>
    <property type="evidence" value="ECO:0007669"/>
    <property type="project" value="UniProtKB-UniRule"/>
</dbReference>
<dbReference type="GO" id="GO:0008270">
    <property type="term" value="F:zinc ion binding"/>
    <property type="evidence" value="ECO:0007669"/>
    <property type="project" value="UniProtKB-UniRule"/>
</dbReference>
<dbReference type="GO" id="GO:0006351">
    <property type="term" value="P:DNA-templated transcription"/>
    <property type="evidence" value="ECO:0007669"/>
    <property type="project" value="UniProtKB-UniRule"/>
</dbReference>
<dbReference type="CDD" id="cd02655">
    <property type="entry name" value="RNAP_beta'_C"/>
    <property type="match status" value="1"/>
</dbReference>
<dbReference type="CDD" id="cd01609">
    <property type="entry name" value="RNAP_beta'_N"/>
    <property type="match status" value="1"/>
</dbReference>
<dbReference type="FunFam" id="1.10.150.390:FF:000002">
    <property type="entry name" value="DNA-directed RNA polymerase subunit beta"/>
    <property type="match status" value="1"/>
</dbReference>
<dbReference type="FunFam" id="4.10.860.120:FF:000001">
    <property type="entry name" value="DNA-directed RNA polymerase subunit beta"/>
    <property type="match status" value="1"/>
</dbReference>
<dbReference type="Gene3D" id="1.10.132.30">
    <property type="match status" value="1"/>
</dbReference>
<dbReference type="Gene3D" id="1.10.150.390">
    <property type="match status" value="1"/>
</dbReference>
<dbReference type="Gene3D" id="1.10.1790.20">
    <property type="match status" value="1"/>
</dbReference>
<dbReference type="Gene3D" id="1.10.40.90">
    <property type="match status" value="1"/>
</dbReference>
<dbReference type="Gene3D" id="2.40.40.20">
    <property type="match status" value="1"/>
</dbReference>
<dbReference type="Gene3D" id="2.40.50.100">
    <property type="match status" value="1"/>
</dbReference>
<dbReference type="Gene3D" id="4.10.860.120">
    <property type="entry name" value="RNA polymerase II, clamp domain"/>
    <property type="match status" value="1"/>
</dbReference>
<dbReference type="Gene3D" id="1.10.274.100">
    <property type="entry name" value="RNA polymerase Rpb1, domain 3"/>
    <property type="match status" value="1"/>
</dbReference>
<dbReference type="HAMAP" id="MF_01322">
    <property type="entry name" value="RNApol_bact_RpoC"/>
    <property type="match status" value="1"/>
</dbReference>
<dbReference type="InterPro" id="IPR045867">
    <property type="entry name" value="DNA-dir_RpoC_beta_prime"/>
</dbReference>
<dbReference type="InterPro" id="IPR012754">
    <property type="entry name" value="DNA-dir_RpoC_beta_prime_bact"/>
</dbReference>
<dbReference type="InterPro" id="IPR000722">
    <property type="entry name" value="RNA_pol_asu"/>
</dbReference>
<dbReference type="InterPro" id="IPR006592">
    <property type="entry name" value="RNA_pol_N"/>
</dbReference>
<dbReference type="InterPro" id="IPR007080">
    <property type="entry name" value="RNA_pol_Rpb1_1"/>
</dbReference>
<dbReference type="InterPro" id="IPR007066">
    <property type="entry name" value="RNA_pol_Rpb1_3"/>
</dbReference>
<dbReference type="InterPro" id="IPR042102">
    <property type="entry name" value="RNA_pol_Rpb1_3_sf"/>
</dbReference>
<dbReference type="InterPro" id="IPR007083">
    <property type="entry name" value="RNA_pol_Rpb1_4"/>
</dbReference>
<dbReference type="InterPro" id="IPR007081">
    <property type="entry name" value="RNA_pol_Rpb1_5"/>
</dbReference>
<dbReference type="InterPro" id="IPR044893">
    <property type="entry name" value="RNA_pol_Rpb1_clamp_domain"/>
</dbReference>
<dbReference type="InterPro" id="IPR038120">
    <property type="entry name" value="Rpb1_funnel_sf"/>
</dbReference>
<dbReference type="NCBIfam" id="TIGR02386">
    <property type="entry name" value="rpoC_TIGR"/>
    <property type="match status" value="1"/>
</dbReference>
<dbReference type="PANTHER" id="PTHR19376">
    <property type="entry name" value="DNA-DIRECTED RNA POLYMERASE"/>
    <property type="match status" value="1"/>
</dbReference>
<dbReference type="PANTHER" id="PTHR19376:SF54">
    <property type="entry name" value="DNA-DIRECTED RNA POLYMERASE SUBUNIT BETA"/>
    <property type="match status" value="1"/>
</dbReference>
<dbReference type="Pfam" id="PF04997">
    <property type="entry name" value="RNA_pol_Rpb1_1"/>
    <property type="match status" value="1"/>
</dbReference>
<dbReference type="Pfam" id="PF00623">
    <property type="entry name" value="RNA_pol_Rpb1_2"/>
    <property type="match status" value="2"/>
</dbReference>
<dbReference type="Pfam" id="PF04983">
    <property type="entry name" value="RNA_pol_Rpb1_3"/>
    <property type="match status" value="1"/>
</dbReference>
<dbReference type="Pfam" id="PF05000">
    <property type="entry name" value="RNA_pol_Rpb1_4"/>
    <property type="match status" value="1"/>
</dbReference>
<dbReference type="Pfam" id="PF04998">
    <property type="entry name" value="RNA_pol_Rpb1_5"/>
    <property type="match status" value="1"/>
</dbReference>
<dbReference type="SMART" id="SM00663">
    <property type="entry name" value="RPOLA_N"/>
    <property type="match status" value="1"/>
</dbReference>
<dbReference type="SUPFAM" id="SSF64484">
    <property type="entry name" value="beta and beta-prime subunits of DNA dependent RNA-polymerase"/>
    <property type="match status" value="1"/>
</dbReference>
<gene>
    <name evidence="1" type="primary">rpoC</name>
    <name type="ordered locus">SSU98_0123</name>
</gene>
<sequence length="1215" mass="135579">MVDVNRFKSMQITLASPSKVRSWSYGEVKKPETINYRTLKPERDGLFDEVIFGPTKDWECSCGKYKRIRYKGITCDRCGVEVTRAKVRRERMGHIELKAPISHIWYFKGIPSRMGLTLDMSPRALEEVIYFAAYVVIDPKDTPLEHKSIMTEREYRERLREYGYGSFVAKMGAEAIQDLLKQVDLPKEIAALKEELKTASGQKRIKAVRRLDVLDAFYKSGNKPEWMILNILPVIPPDLRPMVQLDGGRFAASDLNELYRRVINRNNRLARLLELNAPGIIVQNEKRMLQEAVDALIDNGRRGRPITGPGSRPLKSLSHMLKGKQGRFRQNLLGKRVDFSGRSVIAVGPTLKMYQCGVPREMAIELFKPFVMREIVARDIAGNVKAAKRLIERGDDRIWDILEEVIKEHPVLLNRAPTLHRLGIQAFEPVLIDGKALRLHPLVCEAYNADFDGDQMAIHVPLSEEAQAEARILMLAAEHILNPKDGKPVVTPSQDMVLGNYYLTMEDAGREGEGMVFKDADEAVMAYRNGYVHLHTRVGIATDSLDKPWKDNQKHKVMMTTVGKILFNAIMPEGLPYLQEPNNANLTEGTPDKYFLEPGSDIKAAIAELPINPPFKKKNLGNIIAEIFKRFRTTETSALLDRLKDLGYYHSTLAGLTVGIADIPVIDNKAEIIEESHERVEQIKKQFRRGMITDDERYAAVTDEWRSAKEKLEKRLVEKQDPKNPIVMMMDSGARGNISNFSQLAGMRGLMSAPNGRIMELPILSNFREGLSVLEMFFSTHGARKGMTDTALKTADSGYLTRRLVDVAQDVIIREDDCGTDRGLDIRSITDGKEMIEPLEERLQGRYTKKTVKHPETGAVIIGPNQLITEDIAREIVNAGVEQVTIRSVFTCNTRHGVCRHCYGINLATGDAVEVGEAVGTIAAQSIGEPGTQLTMRTFHTGGVASNSDITQGLPRVQEIFEARNPKGEAVITEVKGEVIAIEEDASTRTKKVFVKGKTGEGEYVVPFTARMKVEVGDQVARGAALTEGSIQPKRLLEVRDVLAVETYLLSEVQKVYRSQGVEIGDKHIEVMVRQMLRKVRVMDPGDTDLLMGTLMDITDFTDANAEVVIAGGIPATARPVLMGITKASLETNSFLSAASFQETTRVLTDAAIRGKRDNLLGLKENVIIGKIIPAGTGMARYRNLEPQAINEVEIIEDTVAEELAAEAELEAVTE</sequence>